<dbReference type="EC" id="2.3.1.234" evidence="1"/>
<dbReference type="EMBL" id="CP000857">
    <property type="protein sequence ID" value="ACN47369.1"/>
    <property type="molecule type" value="Genomic_DNA"/>
</dbReference>
<dbReference type="RefSeq" id="WP_001264389.1">
    <property type="nucleotide sequence ID" value="NC_012125.1"/>
</dbReference>
<dbReference type="SMR" id="C0PYY1"/>
<dbReference type="KEGG" id="sei:SPC_3284"/>
<dbReference type="HOGENOM" id="CLU_023208_0_0_6"/>
<dbReference type="Proteomes" id="UP000001599">
    <property type="component" value="Chromosome"/>
</dbReference>
<dbReference type="GO" id="GO:0005737">
    <property type="term" value="C:cytoplasm"/>
    <property type="evidence" value="ECO:0007669"/>
    <property type="project" value="UniProtKB-SubCell"/>
</dbReference>
<dbReference type="GO" id="GO:0005506">
    <property type="term" value="F:iron ion binding"/>
    <property type="evidence" value="ECO:0007669"/>
    <property type="project" value="UniProtKB-UniRule"/>
</dbReference>
<dbReference type="GO" id="GO:0061711">
    <property type="term" value="F:N(6)-L-threonylcarbamoyladenine synthase activity"/>
    <property type="evidence" value="ECO:0007669"/>
    <property type="project" value="UniProtKB-EC"/>
</dbReference>
<dbReference type="GO" id="GO:0002949">
    <property type="term" value="P:tRNA threonylcarbamoyladenosine modification"/>
    <property type="evidence" value="ECO:0007669"/>
    <property type="project" value="UniProtKB-UniRule"/>
</dbReference>
<dbReference type="CDD" id="cd24097">
    <property type="entry name" value="ASKHA_NBD_TsaD-like"/>
    <property type="match status" value="1"/>
</dbReference>
<dbReference type="FunFam" id="3.30.420.40:FF:000031">
    <property type="entry name" value="tRNA N6-adenosine threonylcarbamoyltransferase"/>
    <property type="match status" value="1"/>
</dbReference>
<dbReference type="Gene3D" id="3.30.420.40">
    <property type="match status" value="2"/>
</dbReference>
<dbReference type="HAMAP" id="MF_01445">
    <property type="entry name" value="TsaD"/>
    <property type="match status" value="1"/>
</dbReference>
<dbReference type="InterPro" id="IPR043129">
    <property type="entry name" value="ATPase_NBD"/>
</dbReference>
<dbReference type="InterPro" id="IPR000905">
    <property type="entry name" value="Gcp-like_dom"/>
</dbReference>
<dbReference type="InterPro" id="IPR017861">
    <property type="entry name" value="KAE1/TsaD"/>
</dbReference>
<dbReference type="InterPro" id="IPR017860">
    <property type="entry name" value="Peptidase_M22_CS"/>
</dbReference>
<dbReference type="InterPro" id="IPR022450">
    <property type="entry name" value="TsaD"/>
</dbReference>
<dbReference type="NCBIfam" id="TIGR00329">
    <property type="entry name" value="gcp_kae1"/>
    <property type="match status" value="1"/>
</dbReference>
<dbReference type="NCBIfam" id="TIGR03723">
    <property type="entry name" value="T6A_TsaD_YgjD"/>
    <property type="match status" value="1"/>
</dbReference>
<dbReference type="PANTHER" id="PTHR11735">
    <property type="entry name" value="TRNA N6-ADENOSINE THREONYLCARBAMOYLTRANSFERASE"/>
    <property type="match status" value="1"/>
</dbReference>
<dbReference type="PANTHER" id="PTHR11735:SF6">
    <property type="entry name" value="TRNA N6-ADENOSINE THREONYLCARBAMOYLTRANSFERASE, MITOCHONDRIAL"/>
    <property type="match status" value="1"/>
</dbReference>
<dbReference type="Pfam" id="PF00814">
    <property type="entry name" value="TsaD"/>
    <property type="match status" value="1"/>
</dbReference>
<dbReference type="PRINTS" id="PR00789">
    <property type="entry name" value="OSIALOPTASE"/>
</dbReference>
<dbReference type="SUPFAM" id="SSF53067">
    <property type="entry name" value="Actin-like ATPase domain"/>
    <property type="match status" value="1"/>
</dbReference>
<dbReference type="PROSITE" id="PS01016">
    <property type="entry name" value="GLYCOPROTEASE"/>
    <property type="match status" value="1"/>
</dbReference>
<comment type="function">
    <text evidence="1">Required for the formation of a threonylcarbamoyl group on adenosine at position 37 (t(6)A37) in tRNAs that read codons beginning with adenine. Is involved in the transfer of the threonylcarbamoyl moiety of threonylcarbamoyl-AMP (TC-AMP) to the N6 group of A37, together with TsaE and TsaB. TsaD likely plays a direct catalytic role in this reaction.</text>
</comment>
<comment type="catalytic activity">
    <reaction evidence="1">
        <text>L-threonylcarbamoyladenylate + adenosine(37) in tRNA = N(6)-L-threonylcarbamoyladenosine(37) in tRNA + AMP + H(+)</text>
        <dbReference type="Rhea" id="RHEA:37059"/>
        <dbReference type="Rhea" id="RHEA-COMP:10162"/>
        <dbReference type="Rhea" id="RHEA-COMP:10163"/>
        <dbReference type="ChEBI" id="CHEBI:15378"/>
        <dbReference type="ChEBI" id="CHEBI:73682"/>
        <dbReference type="ChEBI" id="CHEBI:74411"/>
        <dbReference type="ChEBI" id="CHEBI:74418"/>
        <dbReference type="ChEBI" id="CHEBI:456215"/>
        <dbReference type="EC" id="2.3.1.234"/>
    </reaction>
</comment>
<comment type="cofactor">
    <cofactor evidence="1">
        <name>Fe(2+)</name>
        <dbReference type="ChEBI" id="CHEBI:29033"/>
    </cofactor>
    <text evidence="1">Binds 1 Fe(2+) ion per subunit.</text>
</comment>
<comment type="subcellular location">
    <subcellularLocation>
        <location evidence="1">Cytoplasm</location>
    </subcellularLocation>
</comment>
<comment type="similarity">
    <text evidence="1">Belongs to the KAE1 / TsaD family.</text>
</comment>
<feature type="chain" id="PRO_1000184978" description="tRNA N6-adenosine threonylcarbamoyltransferase">
    <location>
        <begin position="1"/>
        <end position="337"/>
    </location>
</feature>
<feature type="binding site" evidence="1">
    <location>
        <position position="111"/>
    </location>
    <ligand>
        <name>Fe cation</name>
        <dbReference type="ChEBI" id="CHEBI:24875"/>
    </ligand>
</feature>
<feature type="binding site" evidence="1">
    <location>
        <position position="115"/>
    </location>
    <ligand>
        <name>Fe cation</name>
        <dbReference type="ChEBI" id="CHEBI:24875"/>
    </ligand>
</feature>
<feature type="binding site" evidence="1">
    <location>
        <begin position="134"/>
        <end position="138"/>
    </location>
    <ligand>
        <name>substrate</name>
    </ligand>
</feature>
<feature type="binding site" evidence="1">
    <location>
        <position position="167"/>
    </location>
    <ligand>
        <name>substrate</name>
    </ligand>
</feature>
<feature type="binding site" evidence="1">
    <location>
        <position position="180"/>
    </location>
    <ligand>
        <name>substrate</name>
    </ligand>
</feature>
<feature type="binding site" evidence="1">
    <location>
        <position position="272"/>
    </location>
    <ligand>
        <name>substrate</name>
    </ligand>
</feature>
<feature type="binding site" evidence="1">
    <location>
        <position position="300"/>
    </location>
    <ligand>
        <name>Fe cation</name>
        <dbReference type="ChEBI" id="CHEBI:24875"/>
    </ligand>
</feature>
<name>TSAD_SALPC</name>
<protein>
    <recommendedName>
        <fullName evidence="1">tRNA N6-adenosine threonylcarbamoyltransferase</fullName>
        <ecNumber evidence="1">2.3.1.234</ecNumber>
    </recommendedName>
    <alternativeName>
        <fullName evidence="1">N6-L-threonylcarbamoyladenine synthase</fullName>
        <shortName evidence="1">t(6)A synthase</shortName>
    </alternativeName>
    <alternativeName>
        <fullName evidence="1">t(6)A37 threonylcarbamoyladenosine biosynthesis protein TsaD</fullName>
    </alternativeName>
    <alternativeName>
        <fullName evidence="1">tRNA threonylcarbamoyladenosine biosynthesis protein TsaD</fullName>
    </alternativeName>
</protein>
<organism>
    <name type="scientific">Salmonella paratyphi C (strain RKS4594)</name>
    <dbReference type="NCBI Taxonomy" id="476213"/>
    <lineage>
        <taxon>Bacteria</taxon>
        <taxon>Pseudomonadati</taxon>
        <taxon>Pseudomonadota</taxon>
        <taxon>Gammaproteobacteria</taxon>
        <taxon>Enterobacterales</taxon>
        <taxon>Enterobacteriaceae</taxon>
        <taxon>Salmonella</taxon>
    </lineage>
</organism>
<keyword id="KW-0012">Acyltransferase</keyword>
<keyword id="KW-0963">Cytoplasm</keyword>
<keyword id="KW-0408">Iron</keyword>
<keyword id="KW-0479">Metal-binding</keyword>
<keyword id="KW-0808">Transferase</keyword>
<keyword id="KW-0819">tRNA processing</keyword>
<proteinExistence type="inferred from homology"/>
<accession>C0PYY1</accession>
<sequence>MRVLGIETSCDETGIAIYDDKKGLLANQLYSQVKLHADYGGVVPELASRDHVRKTVPLIQAALKEAGLTASDIDAVAYTAGPGLVGALLVGATVGRSLAFAWNVPAIPVHHMEGHLLAPMLEDNPPDFPFVALLVSGGHTQLISVTGIGQYELLGESIDDAAGEAFDKTAKLLGLDYPGGPMLSKMASQGTAGRFVFPRPMTDRPGLDFSFSGLKTFAANTIRSNGDDEQTRADIARAFEDAVVDTLMIKCKRALESTGFKRLVMAGGVSANRTLRAKLAEMMQKRRGEVFYARPEFCTDNGAMIAYAGMVRFKAGVTADLGVTVRPRWPLAELPAA</sequence>
<gene>
    <name evidence="1" type="primary">tsaD</name>
    <name type="synonym">gcp</name>
    <name type="ordered locus">SPC_3284</name>
</gene>
<reference key="1">
    <citation type="journal article" date="2009" name="PLoS ONE">
        <title>Salmonella paratyphi C: genetic divergence from Salmonella choleraesuis and pathogenic convergence with Salmonella typhi.</title>
        <authorList>
            <person name="Liu W.-Q."/>
            <person name="Feng Y."/>
            <person name="Wang Y."/>
            <person name="Zou Q.-H."/>
            <person name="Chen F."/>
            <person name="Guo J.-T."/>
            <person name="Peng Y.-H."/>
            <person name="Jin Y."/>
            <person name="Li Y.-G."/>
            <person name="Hu S.-N."/>
            <person name="Johnston R.N."/>
            <person name="Liu G.-R."/>
            <person name="Liu S.-L."/>
        </authorList>
    </citation>
    <scope>NUCLEOTIDE SEQUENCE [LARGE SCALE GENOMIC DNA]</scope>
    <source>
        <strain>RKS4594</strain>
    </source>
</reference>
<evidence type="ECO:0000255" key="1">
    <source>
        <dbReference type="HAMAP-Rule" id="MF_01445"/>
    </source>
</evidence>